<organism>
    <name type="scientific">Synechococcus sp. (strain WH7803)</name>
    <dbReference type="NCBI Taxonomy" id="32051"/>
    <lineage>
        <taxon>Bacteria</taxon>
        <taxon>Bacillati</taxon>
        <taxon>Cyanobacteriota</taxon>
        <taxon>Cyanophyceae</taxon>
        <taxon>Synechococcales</taxon>
        <taxon>Synechococcaceae</taxon>
        <taxon>Synechococcus</taxon>
    </lineage>
</organism>
<gene>
    <name evidence="1" type="primary">speH</name>
    <name type="ordered locus">SynWH7803_0451</name>
</gene>
<sequence>MVGKHCILELYDCDKSKLDDEAFLRTTITTAAKRAGATLLNLITHRFEPQGVTGLALLAESHISIHTWPETGYAAVDVFTCGDHTMPEKACQHLRDELKAMNHALRSFLRETPAAVAELERTPECTPR</sequence>
<evidence type="ECO:0000255" key="1">
    <source>
        <dbReference type="HAMAP-Rule" id="MF_00464"/>
    </source>
</evidence>
<dbReference type="EC" id="4.1.1.50" evidence="1"/>
<dbReference type="EMBL" id="CT971583">
    <property type="protein sequence ID" value="CAK22877.1"/>
    <property type="molecule type" value="Genomic_DNA"/>
</dbReference>
<dbReference type="SMR" id="A5GIW2"/>
<dbReference type="STRING" id="32051.SynWH7803_0451"/>
<dbReference type="KEGG" id="syx:SynWH7803_0451"/>
<dbReference type="eggNOG" id="COG1586">
    <property type="taxonomic scope" value="Bacteria"/>
</dbReference>
<dbReference type="HOGENOM" id="CLU_125470_2_0_3"/>
<dbReference type="UniPathway" id="UPA00331">
    <property type="reaction ID" value="UER00451"/>
</dbReference>
<dbReference type="Proteomes" id="UP000001566">
    <property type="component" value="Chromosome"/>
</dbReference>
<dbReference type="GO" id="GO:0005829">
    <property type="term" value="C:cytosol"/>
    <property type="evidence" value="ECO:0007669"/>
    <property type="project" value="TreeGrafter"/>
</dbReference>
<dbReference type="GO" id="GO:0004014">
    <property type="term" value="F:adenosylmethionine decarboxylase activity"/>
    <property type="evidence" value="ECO:0007669"/>
    <property type="project" value="UniProtKB-UniRule"/>
</dbReference>
<dbReference type="GO" id="GO:0008295">
    <property type="term" value="P:spermidine biosynthetic process"/>
    <property type="evidence" value="ECO:0007669"/>
    <property type="project" value="UniProtKB-UniRule"/>
</dbReference>
<dbReference type="FunFam" id="3.30.360.110:FF:000001">
    <property type="entry name" value="S-adenosylmethionine decarboxylase proenzyme"/>
    <property type="match status" value="1"/>
</dbReference>
<dbReference type="Gene3D" id="3.30.160.750">
    <property type="match status" value="1"/>
</dbReference>
<dbReference type="Gene3D" id="3.30.360.110">
    <property type="entry name" value="S-adenosylmethionine decarboxylase domain"/>
    <property type="match status" value="1"/>
</dbReference>
<dbReference type="HAMAP" id="MF_00464">
    <property type="entry name" value="AdoMetDC_1"/>
    <property type="match status" value="1"/>
</dbReference>
<dbReference type="InterPro" id="IPR042286">
    <property type="entry name" value="AdoMetDC_C"/>
</dbReference>
<dbReference type="InterPro" id="IPR003826">
    <property type="entry name" value="AdoMetDC_fam_prok"/>
</dbReference>
<dbReference type="InterPro" id="IPR042284">
    <property type="entry name" value="AdoMetDC_N"/>
</dbReference>
<dbReference type="InterPro" id="IPR016067">
    <property type="entry name" value="S-AdoMet_deCO2ase_core"/>
</dbReference>
<dbReference type="InterPro" id="IPR017716">
    <property type="entry name" value="S-AdoMet_deCOase_pro-enz"/>
</dbReference>
<dbReference type="NCBIfam" id="TIGR03330">
    <property type="entry name" value="SAM_DCase_Bsu"/>
    <property type="match status" value="1"/>
</dbReference>
<dbReference type="PANTHER" id="PTHR33866">
    <property type="entry name" value="S-ADENOSYLMETHIONINE DECARBOXYLASE PROENZYME"/>
    <property type="match status" value="1"/>
</dbReference>
<dbReference type="PANTHER" id="PTHR33866:SF2">
    <property type="entry name" value="S-ADENOSYLMETHIONINE DECARBOXYLASE PROENZYME"/>
    <property type="match status" value="1"/>
</dbReference>
<dbReference type="Pfam" id="PF02675">
    <property type="entry name" value="AdoMet_dc"/>
    <property type="match status" value="1"/>
</dbReference>
<dbReference type="SUPFAM" id="SSF56276">
    <property type="entry name" value="S-adenosylmethionine decarboxylase"/>
    <property type="match status" value="1"/>
</dbReference>
<reference key="1">
    <citation type="submission" date="2006-05" db="EMBL/GenBank/DDBJ databases">
        <authorList>
            <consortium name="Genoscope"/>
        </authorList>
    </citation>
    <scope>NUCLEOTIDE SEQUENCE [LARGE SCALE GENOMIC DNA]</scope>
    <source>
        <strain>WH7803</strain>
    </source>
</reference>
<protein>
    <recommendedName>
        <fullName evidence="1">S-adenosylmethionine decarboxylase proenzyme</fullName>
        <shortName evidence="1">AdoMetDC</shortName>
        <shortName evidence="1">SAMDC</shortName>
        <ecNumber evidence="1">4.1.1.50</ecNumber>
    </recommendedName>
    <component>
        <recommendedName>
            <fullName evidence="1">S-adenosylmethionine decarboxylase beta chain</fullName>
        </recommendedName>
    </component>
    <component>
        <recommendedName>
            <fullName evidence="1">S-adenosylmethionine decarboxylase alpha chain</fullName>
        </recommendedName>
    </component>
</protein>
<name>SPEH_SYNPW</name>
<feature type="chain" id="PRO_1000013684" description="S-adenosylmethionine decarboxylase beta chain" evidence="1">
    <location>
        <begin position="1"/>
        <end position="60"/>
    </location>
</feature>
<feature type="chain" id="PRO_0000315033" description="S-adenosylmethionine decarboxylase alpha chain" evidence="1">
    <location>
        <begin position="61"/>
        <end position="128"/>
    </location>
</feature>
<feature type="active site" description="Schiff-base intermediate with substrate; via pyruvic acid" evidence="1">
    <location>
        <position position="61"/>
    </location>
</feature>
<feature type="active site" description="Proton acceptor; for processing activity" evidence="1">
    <location>
        <position position="66"/>
    </location>
</feature>
<feature type="active site" description="Proton donor; for catalytic activity" evidence="1">
    <location>
        <position position="81"/>
    </location>
</feature>
<feature type="site" description="Cleavage (non-hydrolytic); by autolysis" evidence="1">
    <location>
        <begin position="60"/>
        <end position="61"/>
    </location>
</feature>
<feature type="modified residue" description="Pyruvic acid (Ser); by autocatalysis" evidence="1">
    <location>
        <position position="61"/>
    </location>
</feature>
<proteinExistence type="inferred from homology"/>
<comment type="function">
    <text evidence="1">Catalyzes the decarboxylation of S-adenosylmethionine to S-adenosylmethioninamine (dcAdoMet), the propylamine donor required for the synthesis of the polyamines spermine and spermidine from the diamine putrescine.</text>
</comment>
<comment type="catalytic activity">
    <reaction evidence="1">
        <text>S-adenosyl-L-methionine + H(+) = S-adenosyl 3-(methylsulfanyl)propylamine + CO2</text>
        <dbReference type="Rhea" id="RHEA:15981"/>
        <dbReference type="ChEBI" id="CHEBI:15378"/>
        <dbReference type="ChEBI" id="CHEBI:16526"/>
        <dbReference type="ChEBI" id="CHEBI:57443"/>
        <dbReference type="ChEBI" id="CHEBI:59789"/>
        <dbReference type="EC" id="4.1.1.50"/>
    </reaction>
</comment>
<comment type="cofactor">
    <cofactor evidence="1">
        <name>pyruvate</name>
        <dbReference type="ChEBI" id="CHEBI:15361"/>
    </cofactor>
    <text evidence="1">Binds 1 pyruvoyl group covalently per subunit.</text>
</comment>
<comment type="pathway">
    <text evidence="1">Amine and polyamine biosynthesis; S-adenosylmethioninamine biosynthesis; S-adenosylmethioninamine from S-adenosyl-L-methionine: step 1/1.</text>
</comment>
<comment type="subunit">
    <text evidence="1">Heterotetramer of two alpha and two beta chains arranged as a dimer of alpha/beta heterodimers.</text>
</comment>
<comment type="PTM">
    <text evidence="1">Is synthesized initially as an inactive proenzyme. Formation of the active enzyme involves a self-maturation process in which the active site pyruvoyl group is generated from an internal serine residue via an autocatalytic post-translational modification. Two non-identical subunits are generated from the proenzyme in this reaction, and the pyruvate is formed at the N-terminus of the alpha chain, which is derived from the carboxyl end of the proenzyme. The post-translation cleavage follows an unusual pathway, termed non-hydrolytic serinolysis, in which the side chain hydroxyl group of the serine supplies its oxygen atom to form the C-terminus of the beta chain, while the remainder of the serine residue undergoes an oxidative deamination to produce ammonia and the pyruvoyl group blocking the N-terminus of the alpha chain.</text>
</comment>
<comment type="similarity">
    <text evidence="1">Belongs to the prokaryotic AdoMetDC family. Type 1 subfamily.</text>
</comment>
<keyword id="KW-0068">Autocatalytic cleavage</keyword>
<keyword id="KW-0210">Decarboxylase</keyword>
<keyword id="KW-0456">Lyase</keyword>
<keyword id="KW-0620">Polyamine biosynthesis</keyword>
<keyword id="KW-0670">Pyruvate</keyword>
<keyword id="KW-1185">Reference proteome</keyword>
<keyword id="KW-0949">S-adenosyl-L-methionine</keyword>
<keyword id="KW-0704">Schiff base</keyword>
<keyword id="KW-0745">Spermidine biosynthesis</keyword>
<keyword id="KW-0865">Zymogen</keyword>
<accession>A5GIW2</accession>